<sequence length="170" mass="19976">MSAKSKQYFNIFVFIISLIFFDQLSKYLVAKYVKLGSIYFSFFDDFFRIIHVRNTGILFSMGSNIHYSLKKIFFLAMPIFILIFVFYLSLKERNCIARISLLLIFSGGVGNVIDRLFRPSGVVDFLDLKFYGIFGLDRWPTFNFADSYVVIGMILFLVYDFFIKRKVLNK</sequence>
<gene>
    <name evidence="1" type="primary">lspA</name>
    <name type="synonym">lsp</name>
    <name type="ordered locus">BB_0469</name>
</gene>
<feature type="chain" id="PRO_0000178770" description="Lipoprotein signal peptidase">
    <location>
        <begin position="1"/>
        <end position="170"/>
    </location>
</feature>
<feature type="transmembrane region" description="Helical" evidence="1">
    <location>
        <begin position="9"/>
        <end position="29"/>
    </location>
</feature>
<feature type="transmembrane region" description="Helical" evidence="1">
    <location>
        <begin position="72"/>
        <end position="92"/>
    </location>
</feature>
<feature type="transmembrane region" description="Helical" evidence="1">
    <location>
        <begin position="94"/>
        <end position="114"/>
    </location>
</feature>
<feature type="transmembrane region" description="Helical" evidence="1">
    <location>
        <begin position="143"/>
        <end position="163"/>
    </location>
</feature>
<feature type="active site" evidence="1">
    <location>
        <position position="124"/>
    </location>
</feature>
<feature type="active site" evidence="1">
    <location>
        <position position="146"/>
    </location>
</feature>
<reference key="1">
    <citation type="journal article" date="1997" name="Nature">
        <title>Genomic sequence of a Lyme disease spirochaete, Borrelia burgdorferi.</title>
        <authorList>
            <person name="Fraser C.M."/>
            <person name="Casjens S."/>
            <person name="Huang W.M."/>
            <person name="Sutton G.G."/>
            <person name="Clayton R.A."/>
            <person name="Lathigra R."/>
            <person name="White O."/>
            <person name="Ketchum K.A."/>
            <person name="Dodson R.J."/>
            <person name="Hickey E.K."/>
            <person name="Gwinn M.L."/>
            <person name="Dougherty B.A."/>
            <person name="Tomb J.-F."/>
            <person name="Fleischmann R.D."/>
            <person name="Richardson D.L."/>
            <person name="Peterson J.D."/>
            <person name="Kerlavage A.R."/>
            <person name="Quackenbush J."/>
            <person name="Salzberg S.L."/>
            <person name="Hanson M."/>
            <person name="van Vugt R."/>
            <person name="Palmer N."/>
            <person name="Adams M.D."/>
            <person name="Gocayne J.D."/>
            <person name="Weidman J.F."/>
            <person name="Utterback T.R."/>
            <person name="Watthey L."/>
            <person name="McDonald L.A."/>
            <person name="Artiach P."/>
            <person name="Bowman C."/>
            <person name="Garland S.A."/>
            <person name="Fujii C."/>
            <person name="Cotton M.D."/>
            <person name="Horst K."/>
            <person name="Roberts K.M."/>
            <person name="Hatch B."/>
            <person name="Smith H.O."/>
            <person name="Venter J.C."/>
        </authorList>
    </citation>
    <scope>NUCLEOTIDE SEQUENCE [LARGE SCALE GENOMIC DNA]</scope>
    <source>
        <strain>ATCC 35210 / DSM 4680 / CIP 102532 / B31</strain>
    </source>
</reference>
<proteinExistence type="inferred from homology"/>
<organism>
    <name type="scientific">Borreliella burgdorferi (strain ATCC 35210 / DSM 4680 / CIP 102532 / B31)</name>
    <name type="common">Borrelia burgdorferi</name>
    <dbReference type="NCBI Taxonomy" id="224326"/>
    <lineage>
        <taxon>Bacteria</taxon>
        <taxon>Pseudomonadati</taxon>
        <taxon>Spirochaetota</taxon>
        <taxon>Spirochaetia</taxon>
        <taxon>Spirochaetales</taxon>
        <taxon>Borreliaceae</taxon>
        <taxon>Borreliella</taxon>
    </lineage>
</organism>
<comment type="function">
    <text evidence="1">This protein specifically catalyzes the removal of signal peptides from prolipoproteins.</text>
</comment>
<comment type="catalytic activity">
    <reaction evidence="1">
        <text>Release of signal peptides from bacterial membrane prolipoproteins. Hydrolyzes -Xaa-Yaa-Zaa-|-(S,diacylglyceryl)Cys-, in which Xaa is hydrophobic (preferably Leu), and Yaa (Ala or Ser) and Zaa (Gly or Ala) have small, neutral side chains.</text>
        <dbReference type="EC" id="3.4.23.36"/>
    </reaction>
</comment>
<comment type="pathway">
    <text evidence="1">Protein modification; lipoprotein biosynthesis (signal peptide cleavage).</text>
</comment>
<comment type="subcellular location">
    <subcellularLocation>
        <location evidence="1">Cell inner membrane</location>
        <topology evidence="1">Multi-pass membrane protein</topology>
    </subcellularLocation>
</comment>
<comment type="similarity">
    <text evidence="1 2">Belongs to the peptidase A8 family.</text>
</comment>
<protein>
    <recommendedName>
        <fullName evidence="1">Lipoprotein signal peptidase</fullName>
        <ecNumber evidence="1">3.4.23.36</ecNumber>
    </recommendedName>
    <alternativeName>
        <fullName evidence="1">Prolipoprotein signal peptidase</fullName>
    </alternativeName>
    <alternativeName>
        <fullName evidence="1">Signal peptidase II</fullName>
        <shortName evidence="1">SPase II</shortName>
    </alternativeName>
</protein>
<name>LSPA_BORBU</name>
<dbReference type="EC" id="3.4.23.36" evidence="1"/>
<dbReference type="EMBL" id="AE000783">
    <property type="protein sequence ID" value="AAC66825.1"/>
    <property type="molecule type" value="Genomic_DNA"/>
</dbReference>
<dbReference type="PIR" id="D70158">
    <property type="entry name" value="D70158"/>
</dbReference>
<dbReference type="RefSeq" id="NP_212603.1">
    <property type="nucleotide sequence ID" value="NC_001318.1"/>
</dbReference>
<dbReference type="RefSeq" id="WP_002655974.1">
    <property type="nucleotide sequence ID" value="NC_001318.1"/>
</dbReference>
<dbReference type="SMR" id="O51425"/>
<dbReference type="STRING" id="224326.BB_0469"/>
<dbReference type="PaxDb" id="224326-BB_0469"/>
<dbReference type="EnsemblBacteria" id="AAC66825">
    <property type="protein sequence ID" value="AAC66825"/>
    <property type="gene ID" value="BB_0469"/>
</dbReference>
<dbReference type="GeneID" id="56567905"/>
<dbReference type="KEGG" id="bbu:BB_0469"/>
<dbReference type="PATRIC" id="fig|224326.49.peg.862"/>
<dbReference type="HOGENOM" id="CLU_083252_3_1_12"/>
<dbReference type="OrthoDB" id="9810259at2"/>
<dbReference type="UniPathway" id="UPA00665"/>
<dbReference type="Proteomes" id="UP000001807">
    <property type="component" value="Chromosome"/>
</dbReference>
<dbReference type="GO" id="GO:0005886">
    <property type="term" value="C:plasma membrane"/>
    <property type="evidence" value="ECO:0007669"/>
    <property type="project" value="UniProtKB-SubCell"/>
</dbReference>
<dbReference type="GO" id="GO:0004190">
    <property type="term" value="F:aspartic-type endopeptidase activity"/>
    <property type="evidence" value="ECO:0007669"/>
    <property type="project" value="UniProtKB-UniRule"/>
</dbReference>
<dbReference type="GO" id="GO:0006508">
    <property type="term" value="P:proteolysis"/>
    <property type="evidence" value="ECO:0007669"/>
    <property type="project" value="UniProtKB-KW"/>
</dbReference>
<dbReference type="HAMAP" id="MF_00161">
    <property type="entry name" value="LspA"/>
    <property type="match status" value="1"/>
</dbReference>
<dbReference type="InterPro" id="IPR001872">
    <property type="entry name" value="Peptidase_A8"/>
</dbReference>
<dbReference type="NCBIfam" id="TIGR00077">
    <property type="entry name" value="lspA"/>
    <property type="match status" value="1"/>
</dbReference>
<dbReference type="PANTHER" id="PTHR33695">
    <property type="entry name" value="LIPOPROTEIN SIGNAL PEPTIDASE"/>
    <property type="match status" value="1"/>
</dbReference>
<dbReference type="PANTHER" id="PTHR33695:SF1">
    <property type="entry name" value="LIPOPROTEIN SIGNAL PEPTIDASE"/>
    <property type="match status" value="1"/>
</dbReference>
<dbReference type="Pfam" id="PF01252">
    <property type="entry name" value="Peptidase_A8"/>
    <property type="match status" value="1"/>
</dbReference>
<dbReference type="PRINTS" id="PR00781">
    <property type="entry name" value="LIPOSIGPTASE"/>
</dbReference>
<dbReference type="PROSITE" id="PS00855">
    <property type="entry name" value="SPASE_II"/>
    <property type="match status" value="1"/>
</dbReference>
<accession>O51425</accession>
<keyword id="KW-0064">Aspartyl protease</keyword>
<keyword id="KW-0997">Cell inner membrane</keyword>
<keyword id="KW-1003">Cell membrane</keyword>
<keyword id="KW-0378">Hydrolase</keyword>
<keyword id="KW-0472">Membrane</keyword>
<keyword id="KW-0645">Protease</keyword>
<keyword id="KW-1185">Reference proteome</keyword>
<keyword id="KW-0812">Transmembrane</keyword>
<keyword id="KW-1133">Transmembrane helix</keyword>
<evidence type="ECO:0000255" key="1">
    <source>
        <dbReference type="HAMAP-Rule" id="MF_00161"/>
    </source>
</evidence>
<evidence type="ECO:0000305" key="2"/>